<reference key="1">
    <citation type="journal article" date="1990" name="J. Bacteriol.">
        <title>Sequence of the Klebsiella aerogenes urease genes and evidence for accessory proteins facilitating nickel incorporation.</title>
        <authorList>
            <person name="Mulrooney S.B."/>
            <person name="Hausinger R.P."/>
        </authorList>
    </citation>
    <scope>NUCLEOTIDE SEQUENCE [GENOMIC DNA]</scope>
    <scope>CATALYTIC ACTIVITY</scope>
    <source>
        <strain>CG253</strain>
    </source>
</reference>
<reference key="2">
    <citation type="journal article" date="1992" name="J. Biol. Chem.">
        <title>Site-directed mutagenesis of the active site cysteine in Klebsiella aerogenes urease.</title>
        <authorList>
            <person name="Martin P.R."/>
            <person name="Hausinger R.P."/>
        </authorList>
    </citation>
    <scope>CATALYTIC ACTIVITY</scope>
    <scope>BIOPHYSICOCHEMICAL PROPERTIES</scope>
</reference>
<reference key="3">
    <citation type="journal article" date="1993" name="Protein Sci.">
        <title>Site-directed mutagenesis of Klebsiella aerogenes urease: identification of histidine residues that appear to function in nickel ligation, substrate binding, and catalysis.</title>
        <authorList>
            <person name="Park I.-S."/>
            <person name="Hausinger R.P."/>
        </authorList>
    </citation>
    <scope>CATALYTIC ACTIVITY</scope>
    <scope>BIOPHYSICOCHEMICAL PROPERTIES</scope>
    <scope>MUTAGENESIS OF HIS-39 AND HIS-41</scope>
</reference>
<reference key="4">
    <citation type="journal article" date="1994" name="Proc. Natl. Acad. Sci. U.S.A.">
        <title>In vitro activation of urease apoprotein and role of UreD as a chaperone required for nickel metallocenter assembly.</title>
        <authorList>
            <person name="Park I.-S."/>
            <person name="Carr M.B."/>
            <person name="Hausinger R.P."/>
        </authorList>
    </citation>
    <scope>CATALYTIC ACTIVITY</scope>
    <scope>INTERACTION WITH UREA; UREC AND URED</scope>
</reference>
<reference key="5">
    <citation type="journal article" date="1995" name="J. Bacteriol.">
        <title>Evidence for the presence of urease apoprotein complexes containing UreD, UreF, and UreG in cells that are competent for in vivo enzyme activation.</title>
        <authorList>
            <person name="Park I.-S."/>
            <person name="Hausinger R.P."/>
        </authorList>
    </citation>
    <scope>CATALYTIC ACTIVITY</scope>
    <scope>INTERACTION WITH UREA; UREC; URED; UREF AND UREG</scope>
</reference>
<reference key="6">
    <citation type="journal article" date="1995" name="Science">
        <title>Requirement of carbon dioxide for in vitro assembly of the urease nickel metallocenter.</title>
        <authorList>
            <person name="Park I.-S."/>
            <person name="Hausinger R.P."/>
        </authorList>
    </citation>
    <scope>CATALYTIC ACTIVITY</scope>
    <scope>ACTIVITY REGULATION</scope>
</reference>
<reference key="7">
    <citation type="journal article" date="1996" name="J. Bacteriol.">
        <title>Purification and activation properties of UreD-UreF-urease apoprotein complexes.</title>
        <authorList>
            <person name="Moncrief M.B.C."/>
            <person name="Hausinger R.P."/>
        </authorList>
    </citation>
    <scope>CATALYTIC ACTIVITY</scope>
    <scope>ACTIVITY REGULATION</scope>
    <scope>INTERACTION WITH UREA; UREC; URED AND UREF</scope>
</reference>
<reference key="8">
    <citation type="journal article" date="1999" name="Proc. Natl. Acad. Sci. U.S.A.">
        <title>GTP-dependent activation of urease apoprotein in complex with the UreD, UreF, and UreG accessory proteins.</title>
        <authorList>
            <person name="Soriano A."/>
            <person name="Hausinger R.P."/>
        </authorList>
    </citation>
    <scope>CATALYTIC ACTIVITY</scope>
    <scope>ACTIVITY REGULATION</scope>
    <scope>INTERACTION WITH UREA; UREC; URED; UREF AND UREG</scope>
</reference>
<reference key="9">
    <citation type="journal article" date="2000" name="Biochemistry">
        <title>UreE stimulation of GTP-dependent urease activation in the UreD-UreF-UreG-urease apoprotein complex.</title>
        <authorList>
            <person name="Soriano A."/>
            <person name="Colpas G.J."/>
            <person name="Hausinger R.P."/>
        </authorList>
    </citation>
    <scope>CATALYTIC ACTIVITY</scope>
    <scope>ACTIVITY REGULATION</scope>
    <scope>ACTIVATION OF THE APOPROTEIN BY UREE</scope>
</reference>
<reference key="10">
    <citation type="journal article" date="2001" name="Arch. Biochem. Biophys.">
        <title>Dual effects of ionic strength on Klebsiella aerogenes urease: pH-dependent activation and inhibition.</title>
        <authorList>
            <person name="Mulrooney S.B."/>
            <person name="Zakharian T."/>
            <person name="Schaller R.A."/>
            <person name="Hausinger R.P."/>
        </authorList>
    </citation>
    <scope>BIOPHYSICOCHEMICAL PROPERTIES</scope>
</reference>
<reference key="11">
    <citation type="journal article" date="2004" name="J. Biol. Chem.">
        <title>Chemical cross-linking and mass spectrometric identification of sites of interaction for UreD, UreF, and urease.</title>
        <authorList>
            <person name="Chang Z."/>
            <person name="Kuchar J."/>
            <person name="Hausinger R.P."/>
        </authorList>
    </citation>
    <scope>INTERACTION WITH UREA; UREC; URED AND UREF</scope>
    <scope>IDENTIFICATION BY MASS SPECTROMETRY</scope>
</reference>
<reference key="12">
    <citation type="journal article" date="1995" name="Science">
        <title>The crystal structure of urease from Klebsiella aerogenes.</title>
        <authorList>
            <person name="Jabri E."/>
            <person name="Carr M.B."/>
            <person name="Hausinger R.P."/>
            <person name="Karplus P.A."/>
        </authorList>
    </citation>
    <scope>X-RAY CRYSTALLOGRAPHY (2.2 ANGSTROMS) IN COMPLEX WITH UREA AND UREC</scope>
</reference>
<reference key="13">
    <citation type="journal article" date="1996" name="Biochemistry">
        <title>Structures of the Klebsiella aerogenes urease apoenzyme and two active-site mutants.</title>
        <authorList>
            <person name="Jabri E."/>
            <person name="Karplus P.A."/>
        </authorList>
    </citation>
    <scope>X-RAY CRYSTALLOGRAPHY (2.3 ANGSTROMS) IN COMPLEX WITH UREA AND UREC</scope>
</reference>
<reference key="14">
    <citation type="journal article" date="1996" name="J. Biol. Chem.">
        <title>Characterization of the mononickel metallocenter in H134A mutant urease.</title>
        <authorList>
            <person name="Park I.-S."/>
            <person name="Michel L.O."/>
            <person name="Pearson M.A."/>
            <person name="Jabri E."/>
            <person name="Karplus P.A."/>
            <person name="Wang S."/>
            <person name="Dong J."/>
            <person name="Scott R.A."/>
            <person name="Koehler B.P."/>
            <person name="Johnson M.K."/>
            <person name="Hausinger R.P."/>
        </authorList>
    </citation>
    <scope>X-RAY CRYSTALLOGRAPHY (2.0 ANGSTROMS) IN COMPLEX WITH UREA AND UREC</scope>
</reference>
<reference key="15">
    <citation type="journal article" date="1997" name="Biochemistry">
        <title>Structures of Cys319 variants and acetohydroxamate-inhibited Klebsiella aerogenes urease.</title>
        <authorList>
            <person name="Pearson M.A."/>
            <person name="Michel L.O."/>
            <person name="Hausinger R.P."/>
            <person name="Karplus P.A."/>
        </authorList>
    </citation>
    <scope>X-RAY CRYSTALLOGRAPHY (2.0 ANGSTROMS) IN COMPLEX WITH UREA; UREC AND ACETOHYDROXAMIC ACID</scope>
</reference>
<reference key="16">
    <citation type="journal article" date="1998" name="Biochemistry">
        <title>Chemical rescue of Klebsiella aerogenes urease variants lacking the carbamylated-lysine nickel ligand.</title>
        <authorList>
            <person name="Pearson M.A."/>
            <person name="Schaller R.A."/>
            <person name="Michel L.O."/>
            <person name="Karplus P.A."/>
            <person name="Hausinger R.P."/>
        </authorList>
    </citation>
    <scope>X-RAY CRYSTALLOGRAPHY (2.0 ANGSTROMS) OF 1-101 IN COMPLEX WITH UREA; UREC AND FORMATE</scope>
</reference>
<reference key="17">
    <citation type="journal article" date="1999" name="J. Biol. Inorg. Chem.">
        <title>Characterization of metal-substituted Klebsiella aerogenes urease.</title>
        <authorList>
            <person name="Yamaguchi K."/>
            <person name="Cosper N.J."/>
            <person name="Staalhandske C."/>
            <person name="Scott R.A."/>
            <person name="Pearson M.A."/>
            <person name="Karplus P.A."/>
            <person name="Hausinger R.P."/>
        </authorList>
    </citation>
    <scope>X-RAY CRYSTALLOGRAPHY (2.5 ANGSTROMS) OF 1-101 IN COMPLEX WITH UREA AND UREC</scope>
</reference>
<reference key="18">
    <citation type="journal article" date="2000" name="Biochemistry">
        <title>Kinetic and structural characterization of urease active site variants.</title>
        <authorList>
            <person name="Pearson M.A."/>
            <person name="Park I.-S."/>
            <person name="Schaller R.A."/>
            <person name="Michel L.O."/>
            <person name="Karplus P.A."/>
            <person name="Hausinger R.P."/>
        </authorList>
    </citation>
    <scope>X-RAY CRYSTALLOGRAPHY (1.6 ANGSTROMS) OF 1-101 IN COMPLEX WITH UREA AND UREC</scope>
    <scope>BIOPHYSICOCHEMICAL PROPERTIES</scope>
</reference>
<feature type="chain" id="PRO_0000067577" description="Urease subunit beta">
    <location>
        <begin position="1"/>
        <end position="106"/>
    </location>
</feature>
<feature type="mutagenesis site" description="Reduces activity by 20% and reduces thermal stability above 50 degrees Celsius." evidence="14">
    <original>H</original>
    <variation>A</variation>
    <location>
        <position position="39"/>
    </location>
</feature>
<feature type="mutagenesis site" description="Reduces activity by 30% and reduces thermal stability above 50 degrees Celsius." evidence="14">
    <original>H</original>
    <variation>A</variation>
    <location>
        <position position="41"/>
    </location>
</feature>
<feature type="strand" evidence="20">
    <location>
        <begin position="11"/>
        <end position="14"/>
    </location>
</feature>
<feature type="strand" evidence="20">
    <location>
        <begin position="21"/>
        <end position="28"/>
    </location>
</feature>
<feature type="strand" evidence="20">
    <location>
        <begin position="30"/>
        <end position="32"/>
    </location>
</feature>
<feature type="strand" evidence="20">
    <location>
        <begin position="34"/>
        <end position="37"/>
    </location>
</feature>
<feature type="helix" evidence="20">
    <location>
        <begin position="42"/>
        <end position="44"/>
    </location>
</feature>
<feature type="strand" evidence="20">
    <location>
        <begin position="49"/>
        <end position="51"/>
    </location>
</feature>
<feature type="turn" evidence="20">
    <location>
        <begin position="53"/>
        <end position="58"/>
    </location>
</feature>
<feature type="strand" evidence="20">
    <location>
        <begin position="59"/>
        <end position="61"/>
    </location>
</feature>
<feature type="strand" evidence="20">
    <location>
        <begin position="68"/>
        <end position="71"/>
    </location>
</feature>
<feature type="strand" evidence="20">
    <location>
        <begin position="76"/>
        <end position="83"/>
    </location>
</feature>
<evidence type="ECO:0000255" key="1">
    <source>
        <dbReference type="HAMAP-Rule" id="MF_01954"/>
    </source>
</evidence>
<evidence type="ECO:0000269" key="2">
    <source>
    </source>
</evidence>
<evidence type="ECO:0000269" key="3">
    <source>
    </source>
</evidence>
<evidence type="ECO:0000269" key="4">
    <source>
    </source>
</evidence>
<evidence type="ECO:0000269" key="5">
    <source>
    </source>
</evidence>
<evidence type="ECO:0000269" key="6">
    <source>
    </source>
</evidence>
<evidence type="ECO:0000269" key="7">
    <source>
    </source>
</evidence>
<evidence type="ECO:0000269" key="8">
    <source>
    </source>
</evidence>
<evidence type="ECO:0000269" key="9">
    <source>
    </source>
</evidence>
<evidence type="ECO:0000269" key="10">
    <source>
    </source>
</evidence>
<evidence type="ECO:0000269" key="11">
    <source>
    </source>
</evidence>
<evidence type="ECO:0000269" key="12">
    <source>
    </source>
</evidence>
<evidence type="ECO:0000269" key="13">
    <source>
    </source>
</evidence>
<evidence type="ECO:0000269" key="14">
    <source>
    </source>
</evidence>
<evidence type="ECO:0000269" key="15">
    <source>
    </source>
</evidence>
<evidence type="ECO:0000269" key="16">
    <source>
    </source>
</evidence>
<evidence type="ECO:0000269" key="17">
    <source>
    </source>
</evidence>
<evidence type="ECO:0000269" key="18">
    <source>
    </source>
</evidence>
<evidence type="ECO:0000269" key="19">
    <source>
    </source>
</evidence>
<evidence type="ECO:0007829" key="20">
    <source>
        <dbReference type="PDB" id="4EP8"/>
    </source>
</evidence>
<protein>
    <recommendedName>
        <fullName evidence="1">Urease subunit beta</fullName>
        <ecNumber evidence="1">3.5.1.5</ecNumber>
    </recommendedName>
    <alternativeName>
        <fullName evidence="1">Urea amidohydrolase subunit beta</fullName>
    </alternativeName>
</protein>
<keyword id="KW-0002">3D-structure</keyword>
<keyword id="KW-0963">Cytoplasm</keyword>
<keyword id="KW-0378">Hydrolase</keyword>
<gene>
    <name evidence="1" type="primary">ureB</name>
</gene>
<dbReference type="EC" id="3.5.1.5" evidence="1"/>
<dbReference type="EMBL" id="M36068">
    <property type="protein sequence ID" value="AAA25150.1"/>
    <property type="molecule type" value="Genomic_DNA"/>
</dbReference>
<dbReference type="PDB" id="1A5K">
    <property type="method" value="X-ray"/>
    <property type="resolution" value="2.20 A"/>
    <property type="chains" value="B=1-101"/>
</dbReference>
<dbReference type="PDB" id="1A5L">
    <property type="method" value="X-ray"/>
    <property type="resolution" value="2.20 A"/>
    <property type="chains" value="B=1-101"/>
</dbReference>
<dbReference type="PDB" id="1A5M">
    <property type="method" value="X-ray"/>
    <property type="resolution" value="2.00 A"/>
    <property type="chains" value="B=1-101"/>
</dbReference>
<dbReference type="PDB" id="1A5N">
    <property type="method" value="X-ray"/>
    <property type="resolution" value="2.40 A"/>
    <property type="chains" value="B=1-101"/>
</dbReference>
<dbReference type="PDB" id="1A5O">
    <property type="method" value="X-ray"/>
    <property type="resolution" value="2.50 A"/>
    <property type="chains" value="B=1-101"/>
</dbReference>
<dbReference type="PDB" id="1EF2">
    <property type="method" value="X-ray"/>
    <property type="resolution" value="2.50 A"/>
    <property type="chains" value="B=1-101"/>
</dbReference>
<dbReference type="PDB" id="1EJR">
    <property type="method" value="X-ray"/>
    <property type="resolution" value="2.00 A"/>
    <property type="chains" value="B=1-101"/>
</dbReference>
<dbReference type="PDB" id="1EJS">
    <property type="method" value="X-ray"/>
    <property type="resolution" value="2.00 A"/>
    <property type="chains" value="B=1-101"/>
</dbReference>
<dbReference type="PDB" id="1EJT">
    <property type="method" value="X-ray"/>
    <property type="resolution" value="2.00 A"/>
    <property type="chains" value="B=1-101"/>
</dbReference>
<dbReference type="PDB" id="1EJU">
    <property type="method" value="X-ray"/>
    <property type="resolution" value="2.00 A"/>
    <property type="chains" value="B=1-101"/>
</dbReference>
<dbReference type="PDB" id="1EJV">
    <property type="method" value="X-ray"/>
    <property type="resolution" value="2.40 A"/>
    <property type="chains" value="B=1-101"/>
</dbReference>
<dbReference type="PDB" id="1EJW">
    <property type="method" value="X-ray"/>
    <property type="resolution" value="1.90 A"/>
    <property type="chains" value="B=1-101"/>
</dbReference>
<dbReference type="PDB" id="1EJX">
    <property type="method" value="X-ray"/>
    <property type="resolution" value="1.60 A"/>
    <property type="chains" value="B=1-101"/>
</dbReference>
<dbReference type="PDB" id="1FWA">
    <property type="method" value="X-ray"/>
    <property type="resolution" value="2.00 A"/>
    <property type="chains" value="B=1-106"/>
</dbReference>
<dbReference type="PDB" id="1FWB">
    <property type="method" value="X-ray"/>
    <property type="resolution" value="2.00 A"/>
    <property type="chains" value="B=1-106"/>
</dbReference>
<dbReference type="PDB" id="1FWC">
    <property type="method" value="X-ray"/>
    <property type="resolution" value="2.00 A"/>
    <property type="chains" value="B=1-106"/>
</dbReference>
<dbReference type="PDB" id="1FWD">
    <property type="method" value="X-ray"/>
    <property type="resolution" value="2.00 A"/>
    <property type="chains" value="B=1-106"/>
</dbReference>
<dbReference type="PDB" id="1FWE">
    <property type="method" value="X-ray"/>
    <property type="resolution" value="2.00 A"/>
    <property type="chains" value="B=1-106"/>
</dbReference>
<dbReference type="PDB" id="1FWF">
    <property type="method" value="X-ray"/>
    <property type="resolution" value="2.00 A"/>
    <property type="chains" value="B=1-106"/>
</dbReference>
<dbReference type="PDB" id="1FWG">
    <property type="method" value="X-ray"/>
    <property type="resolution" value="2.00 A"/>
    <property type="chains" value="B=1-106"/>
</dbReference>
<dbReference type="PDB" id="1FWH">
    <property type="method" value="X-ray"/>
    <property type="resolution" value="2.00 A"/>
    <property type="chains" value="B=1-106"/>
</dbReference>
<dbReference type="PDB" id="1FWI">
    <property type="method" value="X-ray"/>
    <property type="resolution" value="2.00 A"/>
    <property type="chains" value="B=1-106"/>
</dbReference>
<dbReference type="PDB" id="1FWJ">
    <property type="method" value="X-ray"/>
    <property type="resolution" value="2.20 A"/>
    <property type="chains" value="B=1-106"/>
</dbReference>
<dbReference type="PDB" id="1KRA">
    <property type="method" value="X-ray"/>
    <property type="resolution" value="2.30 A"/>
    <property type="chains" value="B=1-106"/>
</dbReference>
<dbReference type="PDB" id="1KRB">
    <property type="method" value="X-ray"/>
    <property type="resolution" value="2.50 A"/>
    <property type="chains" value="B=1-106"/>
</dbReference>
<dbReference type="PDB" id="1KRC">
    <property type="method" value="X-ray"/>
    <property type="resolution" value="2.50 A"/>
    <property type="chains" value="B=1-106"/>
</dbReference>
<dbReference type="PDB" id="2KAU">
    <property type="method" value="X-ray"/>
    <property type="resolution" value="2.00 A"/>
    <property type="chains" value="B=1-106"/>
</dbReference>
<dbReference type="PDB" id="4EP8">
    <property type="method" value="X-ray"/>
    <property type="resolution" value="1.55 A"/>
    <property type="chains" value="B=1-101"/>
</dbReference>
<dbReference type="PDB" id="4EPB">
    <property type="method" value="X-ray"/>
    <property type="resolution" value="1.75 A"/>
    <property type="chains" value="B=1-101"/>
</dbReference>
<dbReference type="PDB" id="4EPD">
    <property type="method" value="X-ray"/>
    <property type="resolution" value="1.70 A"/>
    <property type="chains" value="B=1-101"/>
</dbReference>
<dbReference type="PDB" id="4EPE">
    <property type="method" value="X-ray"/>
    <property type="resolution" value="2.05 A"/>
    <property type="chains" value="B=1-101"/>
</dbReference>
<dbReference type="PDBsum" id="1A5K"/>
<dbReference type="PDBsum" id="1A5L"/>
<dbReference type="PDBsum" id="1A5M"/>
<dbReference type="PDBsum" id="1A5N"/>
<dbReference type="PDBsum" id="1A5O"/>
<dbReference type="PDBsum" id="1EF2"/>
<dbReference type="PDBsum" id="1EJR"/>
<dbReference type="PDBsum" id="1EJS"/>
<dbReference type="PDBsum" id="1EJT"/>
<dbReference type="PDBsum" id="1EJU"/>
<dbReference type="PDBsum" id="1EJV"/>
<dbReference type="PDBsum" id="1EJW"/>
<dbReference type="PDBsum" id="1EJX"/>
<dbReference type="PDBsum" id="1FWA"/>
<dbReference type="PDBsum" id="1FWB"/>
<dbReference type="PDBsum" id="1FWC"/>
<dbReference type="PDBsum" id="1FWD"/>
<dbReference type="PDBsum" id="1FWE"/>
<dbReference type="PDBsum" id="1FWF"/>
<dbReference type="PDBsum" id="1FWG"/>
<dbReference type="PDBsum" id="1FWH"/>
<dbReference type="PDBsum" id="1FWI"/>
<dbReference type="PDBsum" id="1FWJ"/>
<dbReference type="PDBsum" id="1KRA"/>
<dbReference type="PDBsum" id="1KRB"/>
<dbReference type="PDBsum" id="1KRC"/>
<dbReference type="PDBsum" id="2KAU"/>
<dbReference type="PDBsum" id="4EP8"/>
<dbReference type="PDBsum" id="4EPB"/>
<dbReference type="PDBsum" id="4EPD"/>
<dbReference type="PDBsum" id="4EPE"/>
<dbReference type="SMR" id="P18315"/>
<dbReference type="IntAct" id="P18315">
    <property type="interactions" value="2"/>
</dbReference>
<dbReference type="MEROPS" id="M38.982"/>
<dbReference type="BRENDA" id="3.5.1.5">
    <property type="organism ID" value="152"/>
</dbReference>
<dbReference type="SABIO-RK" id="P18315"/>
<dbReference type="UniPathway" id="UPA00258">
    <property type="reaction ID" value="UER00370"/>
</dbReference>
<dbReference type="EvolutionaryTrace" id="P18315"/>
<dbReference type="GO" id="GO:0035550">
    <property type="term" value="C:urease complex"/>
    <property type="evidence" value="ECO:0007669"/>
    <property type="project" value="InterPro"/>
</dbReference>
<dbReference type="GO" id="GO:0009039">
    <property type="term" value="F:urease activity"/>
    <property type="evidence" value="ECO:0007669"/>
    <property type="project" value="UniProtKB-UniRule"/>
</dbReference>
<dbReference type="GO" id="GO:0043419">
    <property type="term" value="P:urea catabolic process"/>
    <property type="evidence" value="ECO:0007669"/>
    <property type="project" value="UniProtKB-UniRule"/>
</dbReference>
<dbReference type="CDD" id="cd00407">
    <property type="entry name" value="Urease_beta"/>
    <property type="match status" value="1"/>
</dbReference>
<dbReference type="FunFam" id="2.10.150.10:FF:000001">
    <property type="entry name" value="Urease subunit beta"/>
    <property type="match status" value="1"/>
</dbReference>
<dbReference type="Gene3D" id="2.10.150.10">
    <property type="entry name" value="Urease, beta subunit"/>
    <property type="match status" value="1"/>
</dbReference>
<dbReference type="HAMAP" id="MF_01954">
    <property type="entry name" value="Urease_beta"/>
    <property type="match status" value="1"/>
</dbReference>
<dbReference type="InterPro" id="IPR002019">
    <property type="entry name" value="Urease_beta-like"/>
</dbReference>
<dbReference type="InterPro" id="IPR036461">
    <property type="entry name" value="Urease_betasu_sf"/>
</dbReference>
<dbReference type="InterPro" id="IPR050069">
    <property type="entry name" value="Urease_subunit"/>
</dbReference>
<dbReference type="NCBIfam" id="NF009682">
    <property type="entry name" value="PRK13203.1"/>
    <property type="match status" value="1"/>
</dbReference>
<dbReference type="NCBIfam" id="TIGR00192">
    <property type="entry name" value="urease_beta"/>
    <property type="match status" value="1"/>
</dbReference>
<dbReference type="PANTHER" id="PTHR33569">
    <property type="entry name" value="UREASE"/>
    <property type="match status" value="1"/>
</dbReference>
<dbReference type="PANTHER" id="PTHR33569:SF1">
    <property type="entry name" value="UREASE"/>
    <property type="match status" value="1"/>
</dbReference>
<dbReference type="Pfam" id="PF00699">
    <property type="entry name" value="Urease_beta"/>
    <property type="match status" value="1"/>
</dbReference>
<dbReference type="SUPFAM" id="SSF51278">
    <property type="entry name" value="Urease, beta-subunit"/>
    <property type="match status" value="1"/>
</dbReference>
<name>URE2_KLEAE</name>
<proteinExistence type="evidence at protein level"/>
<accession>P18315</accession>
<comment type="catalytic activity">
    <reaction evidence="1 2 5 7 9 10 12 13 14 17">
        <text>urea + 2 H2O + H(+) = hydrogencarbonate + 2 NH4(+)</text>
        <dbReference type="Rhea" id="RHEA:20557"/>
        <dbReference type="ChEBI" id="CHEBI:15377"/>
        <dbReference type="ChEBI" id="CHEBI:15378"/>
        <dbReference type="ChEBI" id="CHEBI:16199"/>
        <dbReference type="ChEBI" id="CHEBI:17544"/>
        <dbReference type="ChEBI" id="CHEBI:28938"/>
        <dbReference type="EC" id="3.5.1.5"/>
    </reaction>
</comment>
<comment type="activity regulation">
    <text evidence="2 5 12 17">The apoenzyme can be activated in vitro in the presence of nickel ions and carbon dioxide, which promotes carboxylation of 'Lys-217' of the UreC (alpha) subunit.</text>
</comment>
<comment type="biophysicochemical properties">
    <kinetics>
        <KM evidence="4 6 7 14">2.3 mM for urea</KM>
        <Vmax evidence="4 6 7 14">1.9 mmol/min/mg enzyme</Vmax>
    </kinetics>
    <phDependence>
        <text evidence="4 6 7 14">Optimum pH is 7.75.</text>
    </phDependence>
</comment>
<comment type="pathway">
    <text evidence="1">Nitrogen metabolism; urea degradation; CO(2) and NH(3) from urea (urease route): step 1/1.</text>
</comment>
<comment type="subunit">
    <text evidence="1 2 3 4 8 10 11 13 15 16 17 18 19">Heterotrimer of UreA (gamma), UreB (beta) and UreC (alpha) subunits. Three heterotrimers associate to form the active enzyme. The apoenzyme interacts with an accessory complex composed of UreD, UreF and UreG, which is required for the assembly of the nickel containing metallocenter of UreC. The UreE protein may also play a direct role as a metallochaperone in nickel transfer to the urease apoprotein.</text>
</comment>
<comment type="subcellular location">
    <subcellularLocation>
        <location evidence="1">Cytoplasm</location>
    </subcellularLocation>
</comment>
<comment type="similarity">
    <text evidence="1">Belongs to the urease beta subunit family.</text>
</comment>
<organism>
    <name type="scientific">Klebsiella aerogenes</name>
    <name type="common">Enterobacter aerogenes</name>
    <dbReference type="NCBI Taxonomy" id="548"/>
    <lineage>
        <taxon>Bacteria</taxon>
        <taxon>Pseudomonadati</taxon>
        <taxon>Pseudomonadota</taxon>
        <taxon>Gammaproteobacteria</taxon>
        <taxon>Enterobacterales</taxon>
        <taxon>Enterobacteriaceae</taxon>
        <taxon>Klebsiella/Raoultella group</taxon>
        <taxon>Klebsiella</taxon>
    </lineage>
</organism>
<sequence>MIPGEYHVKPGQIALNTGRATCRVVVENHGDRPIQVGSHYHFAEVNPALKFDRQQAAGYRLNIPAGTAVRFEPGQKREVELVAFAGHRAVFGFRGEVMGPLEVNDE</sequence>